<feature type="signal peptide" evidence="1">
    <location>
        <begin position="1"/>
        <end position="24"/>
    </location>
</feature>
<feature type="chain" id="PRO_0000446751" description="U-scoloptoxin(10)-Sm1a" evidence="3">
    <location>
        <begin position="25"/>
        <end position="108"/>
    </location>
</feature>
<dbReference type="SMR" id="P0DPY4"/>
<dbReference type="GO" id="GO:0005576">
    <property type="term" value="C:extracellular region"/>
    <property type="evidence" value="ECO:0007669"/>
    <property type="project" value="UniProtKB-SubCell"/>
</dbReference>
<dbReference type="GO" id="GO:0090729">
    <property type="term" value="F:toxin activity"/>
    <property type="evidence" value="ECO:0007669"/>
    <property type="project" value="UniProtKB-KW"/>
</dbReference>
<name>TXA1A_SCOMO</name>
<accession>P0DPY4</accession>
<proteinExistence type="inferred from homology"/>
<reference key="1">
    <citation type="journal article" date="2014" name="Mol. Biol. Evol.">
        <title>Clawing through evolution: toxin diversification and convergence in the ancient lineage Chilopoda (centipedes).</title>
        <authorList>
            <person name="Undheim E.A."/>
            <person name="Jones A."/>
            <person name="Clauser K.R."/>
            <person name="Holland J.W."/>
            <person name="Pineda S.S."/>
            <person name="King G.F."/>
            <person name="Fry B.G."/>
        </authorList>
    </citation>
    <scope>NUCLEOTIDE SEQUENCE [MRNA]</scope>
    <scope>NOMENCLATURE</scope>
    <source>
        <tissue>Venom gland</tissue>
    </source>
</reference>
<sequence>MNKQWLHFFSVLLLCYVIEETCSLKVEDLPLPKTYLKAVELAKKDAGKDTKLLEKGLLILKNNRRDCMTNCKLVDTCHRLSPECCPEMTPTCLKLDIVQAFLKAQGKL</sequence>
<keyword id="KW-1015">Disulfide bond</keyword>
<keyword id="KW-0964">Secreted</keyword>
<keyword id="KW-0732">Signal</keyword>
<keyword id="KW-0800">Toxin</keyword>
<comment type="subcellular location">
    <subcellularLocation>
        <location evidence="4">Secreted</location>
    </subcellularLocation>
</comment>
<comment type="tissue specificity">
    <text evidence="4">Expressed by the venom gland.</text>
</comment>
<comment type="PTM">
    <text evidence="3">Contains 3 disulfide bonds.</text>
</comment>
<comment type="similarity">
    <text evidence="3">Belongs to the scoloptoxin-10 family.</text>
</comment>
<comment type="caution">
    <text evidence="4">All S.morsitans family members described in 'Undeheim et al., 2014' have not been imported into UniProtKB. Please, refer to this paper to access them.</text>
</comment>
<comment type="online information" name="National Center for Biotechnology Information (NCBI)">
    <link uri="https://www.ncbi.nlm.nih.gov/nuccore/GASH01000111"/>
</comment>
<organism>
    <name type="scientific">Scolopendra morsitans</name>
    <name type="common">Tanzanian blue ringleg centipede</name>
    <dbReference type="NCBI Taxonomy" id="943129"/>
    <lineage>
        <taxon>Eukaryota</taxon>
        <taxon>Metazoa</taxon>
        <taxon>Ecdysozoa</taxon>
        <taxon>Arthropoda</taxon>
        <taxon>Myriapoda</taxon>
        <taxon>Chilopoda</taxon>
        <taxon>Pleurostigmophora</taxon>
        <taxon>Scolopendromorpha</taxon>
        <taxon>Scolopendridae</taxon>
        <taxon>Scolopendra</taxon>
    </lineage>
</organism>
<protein>
    <recommendedName>
        <fullName evidence="2">U-scoloptoxin(10)-Sm1a</fullName>
        <shortName evidence="2">U-SLPTX(10)-Sm1a</shortName>
    </recommendedName>
</protein>
<evidence type="ECO:0000255" key="1"/>
<evidence type="ECO:0000303" key="2">
    <source>
    </source>
</evidence>
<evidence type="ECO:0000305" key="3"/>
<evidence type="ECO:0000305" key="4">
    <source>
    </source>
</evidence>